<comment type="function">
    <text evidence="1 4">FAD-dependent monooxygenase; part of the gene cluster that mediates the biosynthesis of the gamma-pyrones fusapyrone (FPY) and deoxyfusapyrone (dFPY) (Ref.2). FPY is an undecaketide and thus likely synthesized by the polyketide synthase FPY1 from acetyl-CoA functioning as starter unit and the addition of 10 malonyl-CoA extender units by successive Claisen-condensations. Next to this, FPY shares some rare features: C-glycosylated 4-deoxyglucose at C-3, a gem-dimethyl group at C-13, and an alpha-beta to beta-gamma double bond shift at C-20. During FPY biosynthesis mono-C-methyl groups are transferred to the tetra-, penta-, hexa- and heptaketide, while two C-methyl groups are transferred to the nonaketide, suggesting that the CMet domain is programmed to selectively catalyze two successive C-alpha-methylation reactions of the nonaketide, while other alpha-carbons are non- or mono-methylated only. While the origin of the 4'-deoxyglucose moiety remains opaque, its transfer to C-3 is most likely mediated by the C-glycosyltransferase FPY2. Next to this, the hydroxyl group present at C-33 and discriminating between FPY and dFPY, is likely to be installed by the cytochrome P450 monooxygenase FPY7. No putative function can be predicted for the remaining genes FPY3-FPY6 (Probable).</text>
</comment>
<comment type="cofactor">
    <cofactor evidence="3">
        <name>FAD</name>
        <dbReference type="ChEBI" id="CHEBI:57692"/>
    </cofactor>
</comment>
<comment type="pathway">
    <text evidence="4">Secondary metabolite biosynthesis.</text>
</comment>
<comment type="induction">
    <text evidence="1">Expression is induced in the presence of 6mM glutamine.</text>
</comment>
<comment type="similarity">
    <text evidence="3">Belongs to the aromatic-ring hydroxylase family.</text>
</comment>
<reference key="1">
    <citation type="journal article" date="2016" name="Genome Biol. Evol.">
        <title>Comparative 'omics' of the Fusarium fujikuroi species complex highlights differences in genetic potential and metabolite synthesis.</title>
        <authorList>
            <person name="Niehaus E.-M."/>
            <person name="Muensterkoetter M."/>
            <person name="Proctor R.H."/>
            <person name="Brown D.W."/>
            <person name="Sharon A."/>
            <person name="Idan Y."/>
            <person name="Oren-Young L."/>
            <person name="Sieber C.M."/>
            <person name="Novak O."/>
            <person name="Pencik A."/>
            <person name="Tarkowska D."/>
            <person name="Hromadova K."/>
            <person name="Freeman S."/>
            <person name="Maymon M."/>
            <person name="Elazar M."/>
            <person name="Youssef S.A."/>
            <person name="El-Shabrawy E.S.M."/>
            <person name="Shalaby A.B.A."/>
            <person name="Houterman P."/>
            <person name="Brock N.L."/>
            <person name="Burkhardt I."/>
            <person name="Tsavkelova E.A."/>
            <person name="Dickschat J.S."/>
            <person name="Galuszka P."/>
            <person name="Gueldener U."/>
            <person name="Tudzynski B."/>
        </authorList>
    </citation>
    <scope>NUCLEOTIDE SEQUENCE [LARGE SCALE GENOMIC DNA]</scope>
    <source>
        <strain>MRC7560</strain>
    </source>
</reference>
<reference key="2">
    <citation type="journal article" date="2021" name="Front. Fungal Biol.">
        <title>Biosynthesis of fusapyrone depends on the H3K9 methyltransferase, FmKmt1, in Fusarium mangiferae.</title>
        <authorList>
            <person name="Atanasoff-Kardjalieff A.K."/>
            <person name="Luenne F."/>
            <person name="Kalinina S."/>
            <person name="Strauss J."/>
            <person name="Humpf H.U."/>
            <person name="Studt-Reinhold L."/>
        </authorList>
    </citation>
    <scope>FUNCTION</scope>
    <scope>INDUCTION</scope>
</reference>
<keyword id="KW-0274">FAD</keyword>
<keyword id="KW-0285">Flavoprotein</keyword>
<keyword id="KW-0503">Monooxygenase</keyword>
<keyword id="KW-0560">Oxidoreductase</keyword>
<proteinExistence type="evidence at transcript level"/>
<gene>
    <name evidence="2" type="primary">FPY4</name>
    <name type="ORF">FMAN_00005</name>
</gene>
<protein>
    <recommendedName>
        <fullName evidence="2">FAD-dependent monooxygenase FPY4</fullName>
        <ecNumber evidence="4">1.14.13.-</ecNumber>
    </recommendedName>
    <alternativeName>
        <fullName evidence="2">Fusapyrone biosynthesis cluster protein 4</fullName>
    </alternativeName>
</protein>
<evidence type="ECO:0000269" key="1">
    <source ref="2"/>
</evidence>
<evidence type="ECO:0000303" key="2">
    <source ref="2"/>
</evidence>
<evidence type="ECO:0000305" key="3"/>
<evidence type="ECO:0000305" key="4">
    <source ref="2"/>
</evidence>
<organism>
    <name type="scientific">Fusarium mangiferae</name>
    <name type="common">Mango malformation disease fungus</name>
    <dbReference type="NCBI Taxonomy" id="192010"/>
    <lineage>
        <taxon>Eukaryota</taxon>
        <taxon>Fungi</taxon>
        <taxon>Dikarya</taxon>
        <taxon>Ascomycota</taxon>
        <taxon>Pezizomycotina</taxon>
        <taxon>Sordariomycetes</taxon>
        <taxon>Hypocreomycetidae</taxon>
        <taxon>Hypocreales</taxon>
        <taxon>Nectriaceae</taxon>
        <taxon>Fusarium</taxon>
        <taxon>Fusarium fujikuroi species complex</taxon>
    </lineage>
</organism>
<accession>A0A1L7TV57</accession>
<feature type="chain" id="PRO_0000458174" description="FAD-dependent monooxygenase FPY4">
    <location>
        <begin position="1"/>
        <end position="369"/>
    </location>
</feature>
<sequence length="369" mass="40862">MPNLEKEFHNGVNGLNGNTKIENDGCVNPHSLGIIGGGWYGCHIAATLLALGFRVKLFEQHERLLHEASGNNQFRLHMGFHYARHSGTRLQSRDGFLRFVEHYPELSRIVPYNIYAVPTQDSLLDYNTYKAIMASSGVAFTEGAPDGVHITNVDGIMCVPERVLLLTKARAYFEAALKGALELGRKVSSIQEADDGVLIDGEGFDFVVDATWGHYMDLDLQVIYEATLLLYYEGPPEFPAVTLVDGPLASVYPTEVPGVFTLSSVPHTPLGQFKTAAEARAARDGVSPATISAKRALMEEQIMHYLPTFLETFRYIGPQLAVKTKPLGAYDDRSCRVSRRGRMFSVMSGKIDTIFFAHERILSLIDDES</sequence>
<name>FPY4_FUSMA</name>
<dbReference type="EC" id="1.14.13.-" evidence="4"/>
<dbReference type="EMBL" id="FCQH01000013">
    <property type="protein sequence ID" value="CVL02470.1"/>
    <property type="molecule type" value="Genomic_DNA"/>
</dbReference>
<dbReference type="SMR" id="A0A1L7TV57"/>
<dbReference type="VEuPathDB" id="FungiDB:FMAN_00005"/>
<dbReference type="Proteomes" id="UP000184255">
    <property type="component" value="Unassembled WGS sequence"/>
</dbReference>
<dbReference type="GO" id="GO:0004497">
    <property type="term" value="F:monooxygenase activity"/>
    <property type="evidence" value="ECO:0007669"/>
    <property type="project" value="UniProtKB-KW"/>
</dbReference>
<dbReference type="Gene3D" id="3.50.50.60">
    <property type="entry name" value="FAD/NAD(P)-binding domain"/>
    <property type="match status" value="1"/>
</dbReference>
<dbReference type="InterPro" id="IPR036188">
    <property type="entry name" value="FAD/NAD-bd_sf"/>
</dbReference>
<dbReference type="Pfam" id="PF13450">
    <property type="entry name" value="NAD_binding_8"/>
    <property type="match status" value="1"/>
</dbReference>
<dbReference type="SUPFAM" id="SSF51905">
    <property type="entry name" value="FAD/NAD(P)-binding domain"/>
    <property type="match status" value="1"/>
</dbReference>